<organism>
    <name type="scientific">Streptococcus thermophilus (strain ATCC BAA-491 / LMD-9)</name>
    <dbReference type="NCBI Taxonomy" id="322159"/>
    <lineage>
        <taxon>Bacteria</taxon>
        <taxon>Bacillati</taxon>
        <taxon>Bacillota</taxon>
        <taxon>Bacilli</taxon>
        <taxon>Lactobacillales</taxon>
        <taxon>Streptococcaceae</taxon>
        <taxon>Streptococcus</taxon>
    </lineage>
</organism>
<gene>
    <name evidence="1" type="primary">pgi</name>
    <name type="ordered locus">STER_0241</name>
</gene>
<name>G6PI_STRTD</name>
<sequence length="449" mass="49789">MAHIKFDYSKVLDKFVAPHEVDNLQAQVTVADEMIRKGTGPGADFLGWRDLPENYDREEFDRILKAAEKIKEESDVLVVIGIGGSYLGAKAAIDFLSNHFANLQTKEERKAPQIVYAGNSISSTYLADLLEYVEGKDFSVNVISKSGTTTEPAIAFRLFKELLVKKYGQEEANKRIYATTDRQKGAVKVEADANGWETFVVPDDIGGRFSVLTAVGLLPIAVSGADIKALMEGANAARKEYSSSKISENEAYQYAAIRNILYRKGYTTEILANYEPSLQYFAEWWKQLAGESEGKDQRGIYPTSANFSTDLHSLGQFIQEGTRNLFETVVRVDKPRKNVVIPELAEDLDGLGYLQGKDVDFVNKKATDGVLLAHTDGDVPNMFITIPEQDAFTLGYIIYFFELAIALSGYLNAVNPFNQPGVEAYKKNMFALLGKPGFEELGAELNARL</sequence>
<reference key="1">
    <citation type="journal article" date="2006" name="Proc. Natl. Acad. Sci. U.S.A.">
        <title>Comparative genomics of the lactic acid bacteria.</title>
        <authorList>
            <person name="Makarova K.S."/>
            <person name="Slesarev A."/>
            <person name="Wolf Y.I."/>
            <person name="Sorokin A."/>
            <person name="Mirkin B."/>
            <person name="Koonin E.V."/>
            <person name="Pavlov A."/>
            <person name="Pavlova N."/>
            <person name="Karamychev V."/>
            <person name="Polouchine N."/>
            <person name="Shakhova V."/>
            <person name="Grigoriev I."/>
            <person name="Lou Y."/>
            <person name="Rohksar D."/>
            <person name="Lucas S."/>
            <person name="Huang K."/>
            <person name="Goodstein D.M."/>
            <person name="Hawkins T."/>
            <person name="Plengvidhya V."/>
            <person name="Welker D."/>
            <person name="Hughes J."/>
            <person name="Goh Y."/>
            <person name="Benson A."/>
            <person name="Baldwin K."/>
            <person name="Lee J.-H."/>
            <person name="Diaz-Muniz I."/>
            <person name="Dosti B."/>
            <person name="Smeianov V."/>
            <person name="Wechter W."/>
            <person name="Barabote R."/>
            <person name="Lorca G."/>
            <person name="Altermann E."/>
            <person name="Barrangou R."/>
            <person name="Ganesan B."/>
            <person name="Xie Y."/>
            <person name="Rawsthorne H."/>
            <person name="Tamir D."/>
            <person name="Parker C."/>
            <person name="Breidt F."/>
            <person name="Broadbent J.R."/>
            <person name="Hutkins R."/>
            <person name="O'Sullivan D."/>
            <person name="Steele J."/>
            <person name="Unlu G."/>
            <person name="Saier M.H. Jr."/>
            <person name="Klaenhammer T."/>
            <person name="Richardson P."/>
            <person name="Kozyavkin S."/>
            <person name="Weimer B.C."/>
            <person name="Mills D.A."/>
        </authorList>
    </citation>
    <scope>NUCLEOTIDE SEQUENCE [LARGE SCALE GENOMIC DNA]</scope>
    <source>
        <strain>ATCC BAA-491 / LMD-9</strain>
    </source>
</reference>
<accession>Q03ML5</accession>
<protein>
    <recommendedName>
        <fullName evidence="1">Glucose-6-phosphate isomerase</fullName>
        <shortName evidence="1">GPI</shortName>
        <ecNumber evidence="1">5.3.1.9</ecNumber>
    </recommendedName>
    <alternativeName>
        <fullName evidence="1">Phosphoglucose isomerase</fullName>
        <shortName evidence="1">PGI</shortName>
    </alternativeName>
    <alternativeName>
        <fullName evidence="1">Phosphohexose isomerase</fullName>
        <shortName evidence="1">PHI</shortName>
    </alternativeName>
</protein>
<dbReference type="EC" id="5.3.1.9" evidence="1"/>
<dbReference type="EMBL" id="CP000419">
    <property type="protein sequence ID" value="ABJ65557.1"/>
    <property type="molecule type" value="Genomic_DNA"/>
</dbReference>
<dbReference type="RefSeq" id="WP_011680683.1">
    <property type="nucleotide sequence ID" value="NC_008532.1"/>
</dbReference>
<dbReference type="SMR" id="Q03ML5"/>
<dbReference type="KEGG" id="ste:STER_0241"/>
<dbReference type="HOGENOM" id="CLU_037303_0_1_9"/>
<dbReference type="UniPathway" id="UPA00109">
    <property type="reaction ID" value="UER00181"/>
</dbReference>
<dbReference type="UniPathway" id="UPA00138"/>
<dbReference type="GO" id="GO:0005829">
    <property type="term" value="C:cytosol"/>
    <property type="evidence" value="ECO:0007669"/>
    <property type="project" value="TreeGrafter"/>
</dbReference>
<dbReference type="GO" id="GO:0097367">
    <property type="term" value="F:carbohydrate derivative binding"/>
    <property type="evidence" value="ECO:0007669"/>
    <property type="project" value="InterPro"/>
</dbReference>
<dbReference type="GO" id="GO:0004347">
    <property type="term" value="F:glucose-6-phosphate isomerase activity"/>
    <property type="evidence" value="ECO:0007669"/>
    <property type="project" value="UniProtKB-UniRule"/>
</dbReference>
<dbReference type="GO" id="GO:0048029">
    <property type="term" value="F:monosaccharide binding"/>
    <property type="evidence" value="ECO:0007669"/>
    <property type="project" value="TreeGrafter"/>
</dbReference>
<dbReference type="GO" id="GO:0006094">
    <property type="term" value="P:gluconeogenesis"/>
    <property type="evidence" value="ECO:0007669"/>
    <property type="project" value="UniProtKB-UniRule"/>
</dbReference>
<dbReference type="GO" id="GO:0051156">
    <property type="term" value="P:glucose 6-phosphate metabolic process"/>
    <property type="evidence" value="ECO:0007669"/>
    <property type="project" value="TreeGrafter"/>
</dbReference>
<dbReference type="GO" id="GO:0006096">
    <property type="term" value="P:glycolytic process"/>
    <property type="evidence" value="ECO:0007669"/>
    <property type="project" value="UniProtKB-UniRule"/>
</dbReference>
<dbReference type="CDD" id="cd05015">
    <property type="entry name" value="SIS_PGI_1"/>
    <property type="match status" value="1"/>
</dbReference>
<dbReference type="CDD" id="cd05016">
    <property type="entry name" value="SIS_PGI_2"/>
    <property type="match status" value="1"/>
</dbReference>
<dbReference type="FunFam" id="3.40.50.10490:FF:000015">
    <property type="entry name" value="Glucose-6-phosphate isomerase"/>
    <property type="match status" value="1"/>
</dbReference>
<dbReference type="FunFam" id="3.40.50.10490:FF:000016">
    <property type="entry name" value="Glucose-6-phosphate isomerase"/>
    <property type="match status" value="1"/>
</dbReference>
<dbReference type="Gene3D" id="3.40.50.10490">
    <property type="entry name" value="Glucose-6-phosphate isomerase like protein, domain 1"/>
    <property type="match status" value="3"/>
</dbReference>
<dbReference type="HAMAP" id="MF_00473">
    <property type="entry name" value="G6P_isomerase"/>
    <property type="match status" value="1"/>
</dbReference>
<dbReference type="InterPro" id="IPR001672">
    <property type="entry name" value="G6P_Isomerase"/>
</dbReference>
<dbReference type="InterPro" id="IPR018189">
    <property type="entry name" value="Phosphoglucose_isomerase_CS"/>
</dbReference>
<dbReference type="InterPro" id="IPR046348">
    <property type="entry name" value="SIS_dom_sf"/>
</dbReference>
<dbReference type="InterPro" id="IPR035476">
    <property type="entry name" value="SIS_PGI_1"/>
</dbReference>
<dbReference type="InterPro" id="IPR035482">
    <property type="entry name" value="SIS_PGI_2"/>
</dbReference>
<dbReference type="NCBIfam" id="NF010697">
    <property type="entry name" value="PRK14097.1"/>
    <property type="match status" value="1"/>
</dbReference>
<dbReference type="PANTHER" id="PTHR11469">
    <property type="entry name" value="GLUCOSE-6-PHOSPHATE ISOMERASE"/>
    <property type="match status" value="1"/>
</dbReference>
<dbReference type="PANTHER" id="PTHR11469:SF1">
    <property type="entry name" value="GLUCOSE-6-PHOSPHATE ISOMERASE"/>
    <property type="match status" value="1"/>
</dbReference>
<dbReference type="Pfam" id="PF00342">
    <property type="entry name" value="PGI"/>
    <property type="match status" value="1"/>
</dbReference>
<dbReference type="PRINTS" id="PR00662">
    <property type="entry name" value="G6PISOMERASE"/>
</dbReference>
<dbReference type="SUPFAM" id="SSF53697">
    <property type="entry name" value="SIS domain"/>
    <property type="match status" value="1"/>
</dbReference>
<dbReference type="PROSITE" id="PS00765">
    <property type="entry name" value="P_GLUCOSE_ISOMERASE_1"/>
    <property type="match status" value="1"/>
</dbReference>
<dbReference type="PROSITE" id="PS00174">
    <property type="entry name" value="P_GLUCOSE_ISOMERASE_2"/>
    <property type="match status" value="1"/>
</dbReference>
<dbReference type="PROSITE" id="PS51463">
    <property type="entry name" value="P_GLUCOSE_ISOMERASE_3"/>
    <property type="match status" value="1"/>
</dbReference>
<feature type="chain" id="PRO_1000014028" description="Glucose-6-phosphate isomerase">
    <location>
        <begin position="1"/>
        <end position="449"/>
    </location>
</feature>
<feature type="active site" description="Proton donor" evidence="1">
    <location>
        <position position="291"/>
    </location>
</feature>
<feature type="active site" evidence="1">
    <location>
        <position position="312"/>
    </location>
</feature>
<feature type="active site" evidence="1">
    <location>
        <position position="426"/>
    </location>
</feature>
<keyword id="KW-0963">Cytoplasm</keyword>
<keyword id="KW-0312">Gluconeogenesis</keyword>
<keyword id="KW-0324">Glycolysis</keyword>
<keyword id="KW-0413">Isomerase</keyword>
<proteinExistence type="inferred from homology"/>
<evidence type="ECO:0000255" key="1">
    <source>
        <dbReference type="HAMAP-Rule" id="MF_00473"/>
    </source>
</evidence>
<comment type="function">
    <text evidence="1">Catalyzes the reversible isomerization of glucose-6-phosphate to fructose-6-phosphate.</text>
</comment>
<comment type="catalytic activity">
    <reaction evidence="1">
        <text>alpha-D-glucose 6-phosphate = beta-D-fructose 6-phosphate</text>
        <dbReference type="Rhea" id="RHEA:11816"/>
        <dbReference type="ChEBI" id="CHEBI:57634"/>
        <dbReference type="ChEBI" id="CHEBI:58225"/>
        <dbReference type="EC" id="5.3.1.9"/>
    </reaction>
</comment>
<comment type="pathway">
    <text evidence="1">Carbohydrate biosynthesis; gluconeogenesis.</text>
</comment>
<comment type="pathway">
    <text evidence="1">Carbohydrate degradation; glycolysis; D-glyceraldehyde 3-phosphate and glycerone phosphate from D-glucose: step 2/4.</text>
</comment>
<comment type="subcellular location">
    <subcellularLocation>
        <location evidence="1">Cytoplasm</location>
    </subcellularLocation>
</comment>
<comment type="similarity">
    <text evidence="1">Belongs to the GPI family.</text>
</comment>